<reference key="1">
    <citation type="journal article" date="2005" name="J. Bacteriol.">
        <title>Genomic sequence of an otitis media isolate of nontypeable Haemophilus influenzae: comparative study with H. influenzae serotype d, strain KW20.</title>
        <authorList>
            <person name="Harrison A."/>
            <person name="Dyer D.W."/>
            <person name="Gillaspy A."/>
            <person name="Ray W.C."/>
            <person name="Mungur R."/>
            <person name="Carson M.B."/>
            <person name="Zhong H."/>
            <person name="Gipson J."/>
            <person name="Gipson M."/>
            <person name="Johnson L.S."/>
            <person name="Lewis L."/>
            <person name="Bakaletz L.O."/>
            <person name="Munson R.S. Jr."/>
        </authorList>
    </citation>
    <scope>NUCLEOTIDE SEQUENCE [LARGE SCALE GENOMIC DNA]</scope>
    <source>
        <strain>86-028NP</strain>
    </source>
</reference>
<gene>
    <name evidence="1" type="primary">purL</name>
    <name type="ordered locus">NTHI0909</name>
</gene>
<organism>
    <name type="scientific">Haemophilus influenzae (strain 86-028NP)</name>
    <dbReference type="NCBI Taxonomy" id="281310"/>
    <lineage>
        <taxon>Bacteria</taxon>
        <taxon>Pseudomonadati</taxon>
        <taxon>Pseudomonadota</taxon>
        <taxon>Gammaproteobacteria</taxon>
        <taxon>Pasteurellales</taxon>
        <taxon>Pasteurellaceae</taxon>
        <taxon>Haemophilus</taxon>
    </lineage>
</organism>
<dbReference type="EC" id="6.3.5.3" evidence="1"/>
<dbReference type="EMBL" id="CP000057">
    <property type="protein sequence ID" value="AAX87801.1"/>
    <property type="status" value="ALT_INIT"/>
    <property type="molecule type" value="Genomic_DNA"/>
</dbReference>
<dbReference type="RefSeq" id="WP_005655525.1">
    <property type="nucleotide sequence ID" value="NC_007146.2"/>
</dbReference>
<dbReference type="SMR" id="Q4QME6"/>
<dbReference type="MEROPS" id="C56.972"/>
<dbReference type="KEGG" id="hit:NTHI0909"/>
<dbReference type="HOGENOM" id="CLU_001031_0_2_6"/>
<dbReference type="UniPathway" id="UPA00074">
    <property type="reaction ID" value="UER00128"/>
</dbReference>
<dbReference type="Proteomes" id="UP000002525">
    <property type="component" value="Chromosome"/>
</dbReference>
<dbReference type="GO" id="GO:0005737">
    <property type="term" value="C:cytoplasm"/>
    <property type="evidence" value="ECO:0007669"/>
    <property type="project" value="UniProtKB-SubCell"/>
</dbReference>
<dbReference type="GO" id="GO:0005524">
    <property type="term" value="F:ATP binding"/>
    <property type="evidence" value="ECO:0007669"/>
    <property type="project" value="UniProtKB-UniRule"/>
</dbReference>
<dbReference type="GO" id="GO:0046872">
    <property type="term" value="F:metal ion binding"/>
    <property type="evidence" value="ECO:0007669"/>
    <property type="project" value="UniProtKB-KW"/>
</dbReference>
<dbReference type="GO" id="GO:0004642">
    <property type="term" value="F:phosphoribosylformylglycinamidine synthase activity"/>
    <property type="evidence" value="ECO:0007669"/>
    <property type="project" value="UniProtKB-UniRule"/>
</dbReference>
<dbReference type="GO" id="GO:0006189">
    <property type="term" value="P:'de novo' IMP biosynthetic process"/>
    <property type="evidence" value="ECO:0007669"/>
    <property type="project" value="UniProtKB-UniRule"/>
</dbReference>
<dbReference type="CDD" id="cd01740">
    <property type="entry name" value="GATase1_FGAR_AT"/>
    <property type="match status" value="1"/>
</dbReference>
<dbReference type="CDD" id="cd02203">
    <property type="entry name" value="PurL_repeat1"/>
    <property type="match status" value="1"/>
</dbReference>
<dbReference type="CDD" id="cd02204">
    <property type="entry name" value="PurL_repeat2"/>
    <property type="match status" value="1"/>
</dbReference>
<dbReference type="FunFam" id="1.10.8.750:FF:000002">
    <property type="entry name" value="Phosphoribosylformylglycinamidine synthase"/>
    <property type="match status" value="1"/>
</dbReference>
<dbReference type="FunFam" id="3.30.1330.10:FF:000002">
    <property type="entry name" value="Phosphoribosylformylglycinamidine synthase"/>
    <property type="match status" value="1"/>
</dbReference>
<dbReference type="FunFam" id="3.30.1330.10:FF:000005">
    <property type="entry name" value="Phosphoribosylformylglycinamidine synthase"/>
    <property type="match status" value="1"/>
</dbReference>
<dbReference type="FunFam" id="3.40.50.880:FF:000008">
    <property type="entry name" value="Phosphoribosylformylglycinamidine synthase"/>
    <property type="match status" value="1"/>
</dbReference>
<dbReference type="FunFam" id="3.90.650.10:FF:000002">
    <property type="entry name" value="Phosphoribosylformylglycinamidine synthase"/>
    <property type="match status" value="1"/>
</dbReference>
<dbReference type="FunFam" id="3.90.650.10:FF:000005">
    <property type="entry name" value="Phosphoribosylformylglycinamidine synthase"/>
    <property type="match status" value="1"/>
</dbReference>
<dbReference type="Gene3D" id="3.40.50.880">
    <property type="match status" value="1"/>
</dbReference>
<dbReference type="Gene3D" id="1.10.8.750">
    <property type="entry name" value="Phosphoribosylformylglycinamidine synthase, linker domain"/>
    <property type="match status" value="1"/>
</dbReference>
<dbReference type="Gene3D" id="3.90.650.10">
    <property type="entry name" value="PurM-like C-terminal domain"/>
    <property type="match status" value="2"/>
</dbReference>
<dbReference type="Gene3D" id="3.30.1330.10">
    <property type="entry name" value="PurM-like, N-terminal domain"/>
    <property type="match status" value="2"/>
</dbReference>
<dbReference type="HAMAP" id="MF_00419">
    <property type="entry name" value="PurL_1"/>
    <property type="match status" value="1"/>
</dbReference>
<dbReference type="InterPro" id="IPR029062">
    <property type="entry name" value="Class_I_gatase-like"/>
</dbReference>
<dbReference type="InterPro" id="IPR040707">
    <property type="entry name" value="FGAR-AT_N"/>
</dbReference>
<dbReference type="InterPro" id="IPR055181">
    <property type="entry name" value="FGAR-AT_PurM_N-like"/>
</dbReference>
<dbReference type="InterPro" id="IPR010073">
    <property type="entry name" value="PurL_large"/>
</dbReference>
<dbReference type="InterPro" id="IPR041609">
    <property type="entry name" value="PurL_linker"/>
</dbReference>
<dbReference type="InterPro" id="IPR010918">
    <property type="entry name" value="PurM-like_C_dom"/>
</dbReference>
<dbReference type="InterPro" id="IPR036676">
    <property type="entry name" value="PurM-like_C_sf"/>
</dbReference>
<dbReference type="InterPro" id="IPR036921">
    <property type="entry name" value="PurM-like_N_sf"/>
</dbReference>
<dbReference type="InterPro" id="IPR036604">
    <property type="entry name" value="PurS-like_sf"/>
</dbReference>
<dbReference type="NCBIfam" id="TIGR01735">
    <property type="entry name" value="FGAM_synt"/>
    <property type="match status" value="1"/>
</dbReference>
<dbReference type="NCBIfam" id="NF003672">
    <property type="entry name" value="PRK05297.1"/>
    <property type="match status" value="1"/>
</dbReference>
<dbReference type="PANTHER" id="PTHR10099">
    <property type="entry name" value="PHOSPHORIBOSYLFORMYLGLYCINAMIDINE SYNTHASE"/>
    <property type="match status" value="1"/>
</dbReference>
<dbReference type="PANTHER" id="PTHR10099:SF1">
    <property type="entry name" value="PHOSPHORIBOSYLFORMYLGLYCINAMIDINE SYNTHASE"/>
    <property type="match status" value="1"/>
</dbReference>
<dbReference type="Pfam" id="PF02769">
    <property type="entry name" value="AIRS_C"/>
    <property type="match status" value="2"/>
</dbReference>
<dbReference type="Pfam" id="PF18072">
    <property type="entry name" value="FGAR-AT_linker"/>
    <property type="match status" value="1"/>
</dbReference>
<dbReference type="Pfam" id="PF18076">
    <property type="entry name" value="FGAR-AT_N"/>
    <property type="match status" value="1"/>
</dbReference>
<dbReference type="Pfam" id="PF22689">
    <property type="entry name" value="FGAR-AT_PurM_N-like"/>
    <property type="match status" value="1"/>
</dbReference>
<dbReference type="Pfam" id="PF13507">
    <property type="entry name" value="GATase_5"/>
    <property type="match status" value="1"/>
</dbReference>
<dbReference type="SMART" id="SM01211">
    <property type="entry name" value="GATase_5"/>
    <property type="match status" value="1"/>
</dbReference>
<dbReference type="SUPFAM" id="SSF52317">
    <property type="entry name" value="Class I glutamine amidotransferase-like"/>
    <property type="match status" value="1"/>
</dbReference>
<dbReference type="SUPFAM" id="SSF109736">
    <property type="entry name" value="FGAM synthase PurL, linker domain"/>
    <property type="match status" value="1"/>
</dbReference>
<dbReference type="SUPFAM" id="SSF56042">
    <property type="entry name" value="PurM C-terminal domain-like"/>
    <property type="match status" value="2"/>
</dbReference>
<dbReference type="SUPFAM" id="SSF55326">
    <property type="entry name" value="PurM N-terminal domain-like"/>
    <property type="match status" value="2"/>
</dbReference>
<dbReference type="SUPFAM" id="SSF82697">
    <property type="entry name" value="PurS-like"/>
    <property type="match status" value="1"/>
</dbReference>
<dbReference type="PROSITE" id="PS51273">
    <property type="entry name" value="GATASE_TYPE_1"/>
    <property type="match status" value="1"/>
</dbReference>
<proteinExistence type="inferred from homology"/>
<protein>
    <recommendedName>
        <fullName evidence="1">Phosphoribosylformylglycinamidine synthase</fullName>
        <shortName evidence="1">FGAM synthase</shortName>
        <shortName evidence="1">FGAMS</shortName>
        <ecNumber evidence="1">6.3.5.3</ecNumber>
    </recommendedName>
    <alternativeName>
        <fullName evidence="1">Formylglycinamide ribonucleotide amidotransferase</fullName>
        <shortName evidence="1">FGAR amidotransferase</shortName>
        <shortName evidence="1">FGAR-AT</shortName>
    </alternativeName>
</protein>
<keyword id="KW-0067">ATP-binding</keyword>
<keyword id="KW-0963">Cytoplasm</keyword>
<keyword id="KW-0315">Glutamine amidotransferase</keyword>
<keyword id="KW-0436">Ligase</keyword>
<keyword id="KW-0460">Magnesium</keyword>
<keyword id="KW-0479">Metal-binding</keyword>
<keyword id="KW-0547">Nucleotide-binding</keyword>
<keyword id="KW-0658">Purine biosynthesis</keyword>
<name>PUR4_HAEI8</name>
<accession>Q4QME6</accession>
<feature type="chain" id="PRO_0000264575" description="Phosphoribosylformylglycinamidine synthase">
    <location>
        <begin position="1"/>
        <end position="1297"/>
    </location>
</feature>
<feature type="domain" description="Glutamine amidotransferase type-1" evidence="1">
    <location>
        <begin position="1045"/>
        <end position="1297"/>
    </location>
</feature>
<feature type="region of interest" description="Disordered" evidence="2">
    <location>
        <begin position="303"/>
        <end position="329"/>
    </location>
</feature>
<feature type="active site" description="Nucleophile" evidence="1">
    <location>
        <position position="1138"/>
    </location>
</feature>
<feature type="active site" evidence="1">
    <location>
        <position position="1263"/>
    </location>
</feature>
<feature type="active site" evidence="1">
    <location>
        <position position="1265"/>
    </location>
</feature>
<feature type="binding site" evidence="1">
    <location>
        <begin position="308"/>
        <end position="319"/>
    </location>
    <ligand>
        <name>ATP</name>
        <dbReference type="ChEBI" id="CHEBI:30616"/>
    </ligand>
</feature>
<feature type="binding site" evidence="1">
    <location>
        <position position="680"/>
    </location>
    <ligand>
        <name>Mg(2+)</name>
        <dbReference type="ChEBI" id="CHEBI:18420"/>
    </ligand>
</feature>
<feature type="binding site" evidence="1">
    <location>
        <position position="719"/>
    </location>
    <ligand>
        <name>Mg(2+)</name>
        <dbReference type="ChEBI" id="CHEBI:18420"/>
    </ligand>
</feature>
<feature type="binding site" evidence="1">
    <location>
        <position position="723"/>
    </location>
    <ligand>
        <name>Mg(2+)</name>
        <dbReference type="ChEBI" id="CHEBI:18420"/>
    </ligand>
</feature>
<feature type="binding site" evidence="1">
    <location>
        <position position="887"/>
    </location>
    <ligand>
        <name>Mg(2+)</name>
        <dbReference type="ChEBI" id="CHEBI:18420"/>
    </ligand>
</feature>
<feature type="binding site" evidence="1">
    <location>
        <position position="889"/>
    </location>
    <ligand>
        <name>ATP</name>
        <dbReference type="ChEBI" id="CHEBI:30616"/>
    </ligand>
</feature>
<evidence type="ECO:0000255" key="1">
    <source>
        <dbReference type="HAMAP-Rule" id="MF_00419"/>
    </source>
</evidence>
<evidence type="ECO:0000256" key="2">
    <source>
        <dbReference type="SAM" id="MobiDB-lite"/>
    </source>
</evidence>
<evidence type="ECO:0000305" key="3"/>
<comment type="function">
    <text evidence="1">Phosphoribosylformylglycinamidine synthase involved in the purines biosynthetic pathway. Catalyzes the ATP-dependent conversion of formylglycinamide ribonucleotide (FGAR) and glutamine to yield formylglycinamidine ribonucleotide (FGAM) and glutamate.</text>
</comment>
<comment type="catalytic activity">
    <reaction evidence="1">
        <text>N(2)-formyl-N(1)-(5-phospho-beta-D-ribosyl)glycinamide + L-glutamine + ATP + H2O = 2-formamido-N(1)-(5-O-phospho-beta-D-ribosyl)acetamidine + L-glutamate + ADP + phosphate + H(+)</text>
        <dbReference type="Rhea" id="RHEA:17129"/>
        <dbReference type="ChEBI" id="CHEBI:15377"/>
        <dbReference type="ChEBI" id="CHEBI:15378"/>
        <dbReference type="ChEBI" id="CHEBI:29985"/>
        <dbReference type="ChEBI" id="CHEBI:30616"/>
        <dbReference type="ChEBI" id="CHEBI:43474"/>
        <dbReference type="ChEBI" id="CHEBI:58359"/>
        <dbReference type="ChEBI" id="CHEBI:147286"/>
        <dbReference type="ChEBI" id="CHEBI:147287"/>
        <dbReference type="ChEBI" id="CHEBI:456216"/>
        <dbReference type="EC" id="6.3.5.3"/>
    </reaction>
</comment>
<comment type="pathway">
    <text evidence="1">Purine metabolism; IMP biosynthesis via de novo pathway; 5-amino-1-(5-phospho-D-ribosyl)imidazole from N(2)-formyl-N(1)-(5-phospho-D-ribosyl)glycinamide: step 1/2.</text>
</comment>
<comment type="subunit">
    <text evidence="1">Monomer.</text>
</comment>
<comment type="subcellular location">
    <subcellularLocation>
        <location evidence="1">Cytoplasm</location>
    </subcellularLocation>
</comment>
<comment type="similarity">
    <text evidence="1">In the N-terminal section; belongs to the FGAMS family.</text>
</comment>
<comment type="sequence caution" evidence="3">
    <conflict type="erroneous initiation">
        <sequence resource="EMBL-CDS" id="AAX87801"/>
    </conflict>
    <text>Extended N-terminus.</text>
</comment>
<sequence>MTVKTFRGSPALSEFRLTQLQQKCQQYQLPITSVYAEYLHFVEQKTSLVEDEIVKLQALLHYGSMFSELKPAGYCLIVTPRVGTISSWSSKATDIAHNCGLSKVNRIERGIAYYFNIERDLTEAELATLKDLLHDRMLETVLNHETEAALLFTQQEPKALTTIDILNGGRQALERANIALGLALADDEMDYLVESFTALKRNPQDVELYMFAQANSEHCRHKIFNADWIIDGKKQDKSLFKMIKNTFEQTPDFVLSAYKDNAAVMEGSKVGRWFPDPDGQYRVHQEDAHILMKVETHNHPTAISPFPGAATGSGGEIRDEGATGRGAKPKAGLTGFSVSNLVIPNFEQPWENPLSKPNRIASALDIMIDAPLGSAAFNNEFGRPALLGYFRTYEEKVNSFAGKEVRGYHKPIMLAGGIGNIRGEQVQKGEIPIGAKLIVLGGAAMNIGLGGGAASSMDSGKSKEDLDFASVQRENPEMERRCQEVIDRCWQLGEENPILFIHDVGAGGLSNAMPELVHDGRRGGKFDLRSILCDEKGMSPLEIWCNESQERYVLAVAPENLELFTALCERERAPFAVIGEATQAEHLILHDSHFDNNPIDLPMNVLLGKTPKMTREVLSKTVENQSLKTEGIQLKEAFHRVLRLPVVAEKTFLITIGDRSVTGMVARDQMVGPWQIPVSDVAVTTASLDSYHGEAMAMGERSPVALLNFSASARLAVAEAITNIAGTHIGEMKRIKLSANWMSAAGHTGEDAGLYEAVKAVGEELCPALGLTIPVGKDSMSMKTTWIDNGEQKSVTAPLSLVISAFARVEDVRKTLTPQLRTDKGLSSLLLIDLGEGHNRLGATALAQVYKQLGDKPADVVKVQRLKDFYNAMQTLVAEDKLLAYHDRSDGGLITTLAEMAFAGHCGVEVDISALGDNDLAVLFNEELGAVIQVADSQLESVREVLKAHNLLGITHQLGTVTADDRFEISRGSHKLFSEKRSELRSIWAELTYQMQRLRDNPECAEQEFEAKKNPDDKGLSAFLTYDVNEDITAPFINKGVKPTIAILREQGVNSHYEMAAAFDRAGFNAIDVHMSDLMIGRRNLAEFNAMVACGGFSYGDVLGAGGGWAKSILFNPKLHEQFSQFFINPNTLTLGVCNGCQMISNLAEIIPGTENWPHFVRNKSERFEARVSLVKINEVDSVWFAGMAGSHMPIAVSHGEGQVKFKSVEQFAGLKAQGIIAAQYIDNNGSPTELYPANPNGSAEGITAITNLDGRVAIMMPHPERVFRAVSNSWHPENWTEDGAWMRLFRNARMVF</sequence>